<dbReference type="EC" id="4.2.1.20" evidence="1"/>
<dbReference type="EMBL" id="CP000915">
    <property type="protein sequence ID" value="ACD30166.1"/>
    <property type="molecule type" value="Genomic_DNA"/>
</dbReference>
<dbReference type="SMR" id="B2SEK7"/>
<dbReference type="KEGG" id="ftm:FTM_0057"/>
<dbReference type="HOGENOM" id="CLU_016734_3_1_6"/>
<dbReference type="UniPathway" id="UPA00035">
    <property type="reaction ID" value="UER00044"/>
</dbReference>
<dbReference type="GO" id="GO:0005737">
    <property type="term" value="C:cytoplasm"/>
    <property type="evidence" value="ECO:0007669"/>
    <property type="project" value="TreeGrafter"/>
</dbReference>
<dbReference type="GO" id="GO:0004834">
    <property type="term" value="F:tryptophan synthase activity"/>
    <property type="evidence" value="ECO:0007669"/>
    <property type="project" value="UniProtKB-UniRule"/>
</dbReference>
<dbReference type="CDD" id="cd06446">
    <property type="entry name" value="Trp-synth_B"/>
    <property type="match status" value="1"/>
</dbReference>
<dbReference type="FunFam" id="3.40.50.1100:FF:000001">
    <property type="entry name" value="Tryptophan synthase beta chain"/>
    <property type="match status" value="1"/>
</dbReference>
<dbReference type="FunFam" id="3.40.50.1100:FF:000004">
    <property type="entry name" value="Tryptophan synthase beta chain"/>
    <property type="match status" value="1"/>
</dbReference>
<dbReference type="Gene3D" id="3.40.50.1100">
    <property type="match status" value="2"/>
</dbReference>
<dbReference type="HAMAP" id="MF_00133">
    <property type="entry name" value="Trp_synth_beta"/>
    <property type="match status" value="1"/>
</dbReference>
<dbReference type="InterPro" id="IPR006653">
    <property type="entry name" value="Trp_synth_b_CS"/>
</dbReference>
<dbReference type="InterPro" id="IPR006654">
    <property type="entry name" value="Trp_synth_beta"/>
</dbReference>
<dbReference type="InterPro" id="IPR023026">
    <property type="entry name" value="Trp_synth_beta/beta-like"/>
</dbReference>
<dbReference type="InterPro" id="IPR001926">
    <property type="entry name" value="TrpB-like_PALP"/>
</dbReference>
<dbReference type="InterPro" id="IPR036052">
    <property type="entry name" value="TrpB-like_PALP_sf"/>
</dbReference>
<dbReference type="NCBIfam" id="TIGR00263">
    <property type="entry name" value="trpB"/>
    <property type="match status" value="1"/>
</dbReference>
<dbReference type="PANTHER" id="PTHR48077:SF3">
    <property type="entry name" value="TRYPTOPHAN SYNTHASE"/>
    <property type="match status" value="1"/>
</dbReference>
<dbReference type="PANTHER" id="PTHR48077">
    <property type="entry name" value="TRYPTOPHAN SYNTHASE-RELATED"/>
    <property type="match status" value="1"/>
</dbReference>
<dbReference type="Pfam" id="PF00291">
    <property type="entry name" value="PALP"/>
    <property type="match status" value="1"/>
</dbReference>
<dbReference type="PIRSF" id="PIRSF001413">
    <property type="entry name" value="Trp_syn_beta"/>
    <property type="match status" value="1"/>
</dbReference>
<dbReference type="SUPFAM" id="SSF53686">
    <property type="entry name" value="Tryptophan synthase beta subunit-like PLP-dependent enzymes"/>
    <property type="match status" value="1"/>
</dbReference>
<dbReference type="PROSITE" id="PS00168">
    <property type="entry name" value="TRP_SYNTHASE_BETA"/>
    <property type="match status" value="1"/>
</dbReference>
<keyword id="KW-0028">Amino-acid biosynthesis</keyword>
<keyword id="KW-0057">Aromatic amino acid biosynthesis</keyword>
<keyword id="KW-0456">Lyase</keyword>
<keyword id="KW-0663">Pyridoxal phosphate</keyword>
<keyword id="KW-0822">Tryptophan biosynthesis</keyword>
<feature type="chain" id="PRO_1000095791" description="Tryptophan synthase beta chain">
    <location>
        <begin position="1"/>
        <end position="396"/>
    </location>
</feature>
<feature type="modified residue" description="N6-(pyridoxal phosphate)lysine" evidence="1">
    <location>
        <position position="86"/>
    </location>
</feature>
<proteinExistence type="inferred from homology"/>
<name>TRPB_FRATM</name>
<accession>B2SEK7</accession>
<sequence>MSKLNAYFGEYGGQFVPQILVPALDQLEQEFIKAQADESFKQEFKELLQEYAGRPTALTKTRNIVKNTRTKLYLKREDLLHGGAHKTNQVLGQALLAKRMGKKEIIAETGAGQHGVATALACALLDLKCRVYMGAKDVERQSPNVFRMKLMGAEVIPVHSGSATLKDACNEALRDWSANYSKAHYLLGTAAGPHPFPTIVREFQRMIGEETKQQMLAKEGRLPDAVIACVGGGSNAIGMFADFIDEKNVKLIGVEPAGKGIETGEHGAPLKHGKTGIFFGMKAPLMQNSDGQIEESYSISAGLDFPSVGPQHAHLLAIGRAKYASATDDEALDAFKLLCKKEGIIPALESSHALAHALKLAYEDPNKEQLLVVNLSGRGDKDIFTVHDILKEKGEI</sequence>
<gene>
    <name evidence="1" type="primary">trpB</name>
    <name type="ordered locus">FTM_0057</name>
</gene>
<comment type="function">
    <text evidence="1">The beta subunit is responsible for the synthesis of L-tryptophan from indole and L-serine.</text>
</comment>
<comment type="catalytic activity">
    <reaction evidence="1">
        <text>(1S,2R)-1-C-(indol-3-yl)glycerol 3-phosphate + L-serine = D-glyceraldehyde 3-phosphate + L-tryptophan + H2O</text>
        <dbReference type="Rhea" id="RHEA:10532"/>
        <dbReference type="ChEBI" id="CHEBI:15377"/>
        <dbReference type="ChEBI" id="CHEBI:33384"/>
        <dbReference type="ChEBI" id="CHEBI:57912"/>
        <dbReference type="ChEBI" id="CHEBI:58866"/>
        <dbReference type="ChEBI" id="CHEBI:59776"/>
        <dbReference type="EC" id="4.2.1.20"/>
    </reaction>
</comment>
<comment type="cofactor">
    <cofactor evidence="1">
        <name>pyridoxal 5'-phosphate</name>
        <dbReference type="ChEBI" id="CHEBI:597326"/>
    </cofactor>
</comment>
<comment type="pathway">
    <text evidence="1">Amino-acid biosynthesis; L-tryptophan biosynthesis; L-tryptophan from chorismate: step 5/5.</text>
</comment>
<comment type="subunit">
    <text evidence="1">Tetramer of two alpha and two beta chains.</text>
</comment>
<comment type="similarity">
    <text evidence="1">Belongs to the TrpB family.</text>
</comment>
<organism>
    <name type="scientific">Francisella tularensis subsp. mediasiatica (strain FSC147)</name>
    <dbReference type="NCBI Taxonomy" id="441952"/>
    <lineage>
        <taxon>Bacteria</taxon>
        <taxon>Pseudomonadati</taxon>
        <taxon>Pseudomonadota</taxon>
        <taxon>Gammaproteobacteria</taxon>
        <taxon>Thiotrichales</taxon>
        <taxon>Francisellaceae</taxon>
        <taxon>Francisella</taxon>
    </lineage>
</organism>
<protein>
    <recommendedName>
        <fullName evidence="1">Tryptophan synthase beta chain</fullName>
        <ecNumber evidence="1">4.2.1.20</ecNumber>
    </recommendedName>
</protein>
<evidence type="ECO:0000255" key="1">
    <source>
        <dbReference type="HAMAP-Rule" id="MF_00133"/>
    </source>
</evidence>
<reference key="1">
    <citation type="journal article" date="2009" name="PLoS Pathog.">
        <title>Molecular evolutionary consequences of niche restriction in Francisella tularensis, a facultative intracellular pathogen.</title>
        <authorList>
            <person name="Larsson P."/>
            <person name="Elfsmark D."/>
            <person name="Svensson K."/>
            <person name="Wikstroem P."/>
            <person name="Forsman M."/>
            <person name="Brettin T."/>
            <person name="Keim P."/>
            <person name="Johansson A."/>
        </authorList>
    </citation>
    <scope>NUCLEOTIDE SEQUENCE [LARGE SCALE GENOMIC DNA]</scope>
    <source>
        <strain>FSC147</strain>
    </source>
</reference>